<evidence type="ECO:0000255" key="1">
    <source>
        <dbReference type="HAMAP-Rule" id="MF_00004"/>
    </source>
</evidence>
<sequence length="175" mass="18897">MTINFKDYIASVQDYPEPGIIFRDISPLMADGKAYAAATDEIAAYAQDKGVEMIVGPEARGFIVGCPVAYKLGIGFAPARKKGKLPRPTVKASYDLEYGEATLYLHKDAIKPGQRVLVCDDLLATGGTIAATIRLVEQLGGIVVGTAFLIELSDLHGRDKIKDYDMFTLMSYTGA</sequence>
<gene>
    <name evidence="1" type="primary">apt</name>
    <name type="ordered locus">LSEI_1557</name>
</gene>
<name>APT_LACP3</name>
<accession>Q038P1</accession>
<organism>
    <name type="scientific">Lacticaseibacillus paracasei (strain ATCC 334 / BCRC 17002 / CCUG 31169 / CIP 107868 / KCTC 3260 / NRRL B-441)</name>
    <name type="common">Lactobacillus paracasei</name>
    <dbReference type="NCBI Taxonomy" id="321967"/>
    <lineage>
        <taxon>Bacteria</taxon>
        <taxon>Bacillati</taxon>
        <taxon>Bacillota</taxon>
        <taxon>Bacilli</taxon>
        <taxon>Lactobacillales</taxon>
        <taxon>Lactobacillaceae</taxon>
        <taxon>Lacticaseibacillus</taxon>
    </lineage>
</organism>
<dbReference type="EC" id="2.4.2.7" evidence="1"/>
<dbReference type="EMBL" id="CP000423">
    <property type="protein sequence ID" value="ABJ70331.1"/>
    <property type="molecule type" value="Genomic_DNA"/>
</dbReference>
<dbReference type="RefSeq" id="WP_003565731.1">
    <property type="nucleotide sequence ID" value="NC_008526.1"/>
</dbReference>
<dbReference type="RefSeq" id="YP_806773.1">
    <property type="nucleotide sequence ID" value="NC_008526.1"/>
</dbReference>
<dbReference type="SMR" id="Q038P1"/>
<dbReference type="STRING" id="321967.LSEI_1557"/>
<dbReference type="PaxDb" id="321967-LSEI_1557"/>
<dbReference type="KEGG" id="lca:LSEI_1557"/>
<dbReference type="PATRIC" id="fig|321967.11.peg.1538"/>
<dbReference type="HOGENOM" id="CLU_063339_3_0_9"/>
<dbReference type="UniPathway" id="UPA00588">
    <property type="reaction ID" value="UER00646"/>
</dbReference>
<dbReference type="Proteomes" id="UP000001651">
    <property type="component" value="Chromosome"/>
</dbReference>
<dbReference type="GO" id="GO:0005737">
    <property type="term" value="C:cytoplasm"/>
    <property type="evidence" value="ECO:0007669"/>
    <property type="project" value="UniProtKB-SubCell"/>
</dbReference>
<dbReference type="GO" id="GO:0002055">
    <property type="term" value="F:adenine binding"/>
    <property type="evidence" value="ECO:0007669"/>
    <property type="project" value="TreeGrafter"/>
</dbReference>
<dbReference type="GO" id="GO:0003999">
    <property type="term" value="F:adenine phosphoribosyltransferase activity"/>
    <property type="evidence" value="ECO:0007669"/>
    <property type="project" value="UniProtKB-UniRule"/>
</dbReference>
<dbReference type="GO" id="GO:0016208">
    <property type="term" value="F:AMP binding"/>
    <property type="evidence" value="ECO:0007669"/>
    <property type="project" value="TreeGrafter"/>
</dbReference>
<dbReference type="GO" id="GO:0006168">
    <property type="term" value="P:adenine salvage"/>
    <property type="evidence" value="ECO:0007669"/>
    <property type="project" value="InterPro"/>
</dbReference>
<dbReference type="GO" id="GO:0044209">
    <property type="term" value="P:AMP salvage"/>
    <property type="evidence" value="ECO:0007669"/>
    <property type="project" value="UniProtKB-UniRule"/>
</dbReference>
<dbReference type="GO" id="GO:0006166">
    <property type="term" value="P:purine ribonucleoside salvage"/>
    <property type="evidence" value="ECO:0007669"/>
    <property type="project" value="UniProtKB-KW"/>
</dbReference>
<dbReference type="CDD" id="cd06223">
    <property type="entry name" value="PRTases_typeI"/>
    <property type="match status" value="1"/>
</dbReference>
<dbReference type="FunFam" id="3.40.50.2020:FF:000004">
    <property type="entry name" value="Adenine phosphoribosyltransferase"/>
    <property type="match status" value="1"/>
</dbReference>
<dbReference type="Gene3D" id="3.40.50.2020">
    <property type="match status" value="1"/>
</dbReference>
<dbReference type="HAMAP" id="MF_00004">
    <property type="entry name" value="Aden_phosphoribosyltr"/>
    <property type="match status" value="1"/>
</dbReference>
<dbReference type="InterPro" id="IPR005764">
    <property type="entry name" value="Ade_phspho_trans"/>
</dbReference>
<dbReference type="InterPro" id="IPR000836">
    <property type="entry name" value="PRibTrfase_dom"/>
</dbReference>
<dbReference type="InterPro" id="IPR029057">
    <property type="entry name" value="PRTase-like"/>
</dbReference>
<dbReference type="InterPro" id="IPR050054">
    <property type="entry name" value="UPRTase/APRTase"/>
</dbReference>
<dbReference type="NCBIfam" id="TIGR01090">
    <property type="entry name" value="apt"/>
    <property type="match status" value="1"/>
</dbReference>
<dbReference type="NCBIfam" id="NF002633">
    <property type="entry name" value="PRK02304.1-2"/>
    <property type="match status" value="1"/>
</dbReference>
<dbReference type="NCBIfam" id="NF002634">
    <property type="entry name" value="PRK02304.1-3"/>
    <property type="match status" value="1"/>
</dbReference>
<dbReference type="NCBIfam" id="NF002636">
    <property type="entry name" value="PRK02304.1-5"/>
    <property type="match status" value="1"/>
</dbReference>
<dbReference type="PANTHER" id="PTHR32315">
    <property type="entry name" value="ADENINE PHOSPHORIBOSYLTRANSFERASE"/>
    <property type="match status" value="1"/>
</dbReference>
<dbReference type="PANTHER" id="PTHR32315:SF3">
    <property type="entry name" value="ADENINE PHOSPHORIBOSYLTRANSFERASE"/>
    <property type="match status" value="1"/>
</dbReference>
<dbReference type="Pfam" id="PF00156">
    <property type="entry name" value="Pribosyltran"/>
    <property type="match status" value="1"/>
</dbReference>
<dbReference type="SUPFAM" id="SSF53271">
    <property type="entry name" value="PRTase-like"/>
    <property type="match status" value="1"/>
</dbReference>
<dbReference type="PROSITE" id="PS00103">
    <property type="entry name" value="PUR_PYR_PR_TRANSFER"/>
    <property type="match status" value="1"/>
</dbReference>
<proteinExistence type="inferred from homology"/>
<reference key="1">
    <citation type="journal article" date="2006" name="Proc. Natl. Acad. Sci. U.S.A.">
        <title>Comparative genomics of the lactic acid bacteria.</title>
        <authorList>
            <person name="Makarova K.S."/>
            <person name="Slesarev A."/>
            <person name="Wolf Y.I."/>
            <person name="Sorokin A."/>
            <person name="Mirkin B."/>
            <person name="Koonin E.V."/>
            <person name="Pavlov A."/>
            <person name="Pavlova N."/>
            <person name="Karamychev V."/>
            <person name="Polouchine N."/>
            <person name="Shakhova V."/>
            <person name="Grigoriev I."/>
            <person name="Lou Y."/>
            <person name="Rohksar D."/>
            <person name="Lucas S."/>
            <person name="Huang K."/>
            <person name="Goodstein D.M."/>
            <person name="Hawkins T."/>
            <person name="Plengvidhya V."/>
            <person name="Welker D."/>
            <person name="Hughes J."/>
            <person name="Goh Y."/>
            <person name="Benson A."/>
            <person name="Baldwin K."/>
            <person name="Lee J.-H."/>
            <person name="Diaz-Muniz I."/>
            <person name="Dosti B."/>
            <person name="Smeianov V."/>
            <person name="Wechter W."/>
            <person name="Barabote R."/>
            <person name="Lorca G."/>
            <person name="Altermann E."/>
            <person name="Barrangou R."/>
            <person name="Ganesan B."/>
            <person name="Xie Y."/>
            <person name="Rawsthorne H."/>
            <person name="Tamir D."/>
            <person name="Parker C."/>
            <person name="Breidt F."/>
            <person name="Broadbent J.R."/>
            <person name="Hutkins R."/>
            <person name="O'Sullivan D."/>
            <person name="Steele J."/>
            <person name="Unlu G."/>
            <person name="Saier M.H. Jr."/>
            <person name="Klaenhammer T."/>
            <person name="Richardson P."/>
            <person name="Kozyavkin S."/>
            <person name="Weimer B.C."/>
            <person name="Mills D.A."/>
        </authorList>
    </citation>
    <scope>NUCLEOTIDE SEQUENCE [LARGE SCALE GENOMIC DNA]</scope>
    <source>
        <strain>ATCC 334 / BCRC 17002 / CCUG 31169 / CIP 107868 / KCTC 3260 / NRRL B-441</strain>
    </source>
</reference>
<keyword id="KW-0963">Cytoplasm</keyword>
<keyword id="KW-0328">Glycosyltransferase</keyword>
<keyword id="KW-0660">Purine salvage</keyword>
<keyword id="KW-1185">Reference proteome</keyword>
<keyword id="KW-0808">Transferase</keyword>
<protein>
    <recommendedName>
        <fullName evidence="1">Adenine phosphoribosyltransferase</fullName>
        <shortName evidence="1">APRT</shortName>
        <ecNumber evidence="1">2.4.2.7</ecNumber>
    </recommendedName>
</protein>
<comment type="function">
    <text evidence="1">Catalyzes a salvage reaction resulting in the formation of AMP, that is energically less costly than de novo synthesis.</text>
</comment>
<comment type="catalytic activity">
    <reaction evidence="1">
        <text>AMP + diphosphate = 5-phospho-alpha-D-ribose 1-diphosphate + adenine</text>
        <dbReference type="Rhea" id="RHEA:16609"/>
        <dbReference type="ChEBI" id="CHEBI:16708"/>
        <dbReference type="ChEBI" id="CHEBI:33019"/>
        <dbReference type="ChEBI" id="CHEBI:58017"/>
        <dbReference type="ChEBI" id="CHEBI:456215"/>
        <dbReference type="EC" id="2.4.2.7"/>
    </reaction>
</comment>
<comment type="pathway">
    <text evidence="1">Purine metabolism; AMP biosynthesis via salvage pathway; AMP from adenine: step 1/1.</text>
</comment>
<comment type="subunit">
    <text evidence="1">Homodimer.</text>
</comment>
<comment type="subcellular location">
    <subcellularLocation>
        <location evidence="1">Cytoplasm</location>
    </subcellularLocation>
</comment>
<comment type="similarity">
    <text evidence="1">Belongs to the purine/pyrimidine phosphoribosyltransferase family.</text>
</comment>
<feature type="chain" id="PRO_0000329351" description="Adenine phosphoribosyltransferase">
    <location>
        <begin position="1"/>
        <end position="175"/>
    </location>
</feature>